<name>WNT2_NOMLE</name>
<keyword id="KW-0217">Developmental protein</keyword>
<keyword id="KW-1015">Disulfide bond</keyword>
<keyword id="KW-0272">Extracellular matrix</keyword>
<keyword id="KW-0325">Glycoprotein</keyword>
<keyword id="KW-0449">Lipoprotein</keyword>
<keyword id="KW-1185">Reference proteome</keyword>
<keyword id="KW-0964">Secreted</keyword>
<keyword id="KW-0732">Signal</keyword>
<keyword id="KW-0879">Wnt signaling pathway</keyword>
<proteinExistence type="inferred from homology"/>
<protein>
    <recommendedName>
        <fullName>Protein Wnt-2</fullName>
    </recommendedName>
</protein>
<organism>
    <name type="scientific">Nomascus leucogenys</name>
    <name type="common">Northern white-cheeked gibbon</name>
    <name type="synonym">Hylobates leucogenys</name>
    <dbReference type="NCBI Taxonomy" id="61853"/>
    <lineage>
        <taxon>Eukaryota</taxon>
        <taxon>Metazoa</taxon>
        <taxon>Chordata</taxon>
        <taxon>Craniata</taxon>
        <taxon>Vertebrata</taxon>
        <taxon>Euteleostomi</taxon>
        <taxon>Mammalia</taxon>
        <taxon>Eutheria</taxon>
        <taxon>Euarchontoglires</taxon>
        <taxon>Primates</taxon>
        <taxon>Haplorrhini</taxon>
        <taxon>Catarrhini</taxon>
        <taxon>Hylobatidae</taxon>
        <taxon>Nomascus</taxon>
    </lineage>
</organism>
<accession>Q07DX7</accession>
<sequence>MNAPLGGIWLWLPLLLTWLTPEVNSSWWYMRATGGSSRVMCDNVPGLVSSQRQLCHRHPDVMRAISQGVAEWTAECQYQFRQHRWNCNTLDRDHSLFGRVLLRSSRESAFVYAISSAGVVFAITRACSQGEVKSCSCDPKKMGSAKDSKGIFDWGGCSDNIDYGIKFARAFVDAKERKGKDARALMNLHNNRAGRKAVKRFLKQECKCHGVSGSCTLRTCWLAMADFRKTGDYLWRKYNGAIQVVMNQDGTGFTVANERFKKPTKNDLVYFENSPDYCIRDREAGSLGTAGRVCNLTSRGMDSCEVMCCGRGYDTSHVTRMTKCGCKFHWCCAVRCQDCLEALDVHTCKAPKNADWTTPT</sequence>
<evidence type="ECO:0000250" key="1">
    <source>
        <dbReference type="UniProtKB" id="P09544"/>
    </source>
</evidence>
<evidence type="ECO:0000250" key="2">
    <source>
        <dbReference type="UniProtKB" id="P21552"/>
    </source>
</evidence>
<evidence type="ECO:0000250" key="3">
    <source>
        <dbReference type="UniProtKB" id="P28026"/>
    </source>
</evidence>
<evidence type="ECO:0000250" key="4">
    <source>
        <dbReference type="UniProtKB" id="P56704"/>
    </source>
</evidence>
<evidence type="ECO:0000255" key="5"/>
<evidence type="ECO:0000305" key="6"/>
<gene>
    <name type="primary">WNT2</name>
</gene>
<dbReference type="EMBL" id="DP000194">
    <property type="protein sequence ID" value="ABJ08865.1"/>
    <property type="molecule type" value="Genomic_DNA"/>
</dbReference>
<dbReference type="RefSeq" id="XP_003261284.1">
    <property type="nucleotide sequence ID" value="XM_003261236.3"/>
</dbReference>
<dbReference type="SMR" id="Q07DX7"/>
<dbReference type="FunCoup" id="Q07DX7">
    <property type="interactions" value="396"/>
</dbReference>
<dbReference type="STRING" id="61853.ENSNLEP00000014161"/>
<dbReference type="GlyCosmos" id="Q07DX7">
    <property type="glycosylation" value="1 site, No reported glycans"/>
</dbReference>
<dbReference type="Ensembl" id="ENSNLET00000014854.2">
    <property type="protein sequence ID" value="ENSNLEP00000014161.1"/>
    <property type="gene ID" value="ENSNLEG00000011635.2"/>
</dbReference>
<dbReference type="GeneID" id="100600353"/>
<dbReference type="KEGG" id="nle:100600353"/>
<dbReference type="CTD" id="7472"/>
<dbReference type="eggNOG" id="KOG3913">
    <property type="taxonomic scope" value="Eukaryota"/>
</dbReference>
<dbReference type="GeneTree" id="ENSGT00940000159231"/>
<dbReference type="HOGENOM" id="CLU_033039_1_4_1"/>
<dbReference type="InParanoid" id="Q07DX7"/>
<dbReference type="OMA" id="ITRMTKC"/>
<dbReference type="OrthoDB" id="5945655at2759"/>
<dbReference type="TreeFam" id="TF105310"/>
<dbReference type="Proteomes" id="UP000001073">
    <property type="component" value="Chromosome 13"/>
</dbReference>
<dbReference type="GO" id="GO:0005737">
    <property type="term" value="C:cytoplasm"/>
    <property type="evidence" value="ECO:0007669"/>
    <property type="project" value="Ensembl"/>
</dbReference>
<dbReference type="GO" id="GO:0005615">
    <property type="term" value="C:extracellular space"/>
    <property type="evidence" value="ECO:0007669"/>
    <property type="project" value="TreeGrafter"/>
</dbReference>
<dbReference type="GO" id="GO:0005125">
    <property type="term" value="F:cytokine activity"/>
    <property type="evidence" value="ECO:0007669"/>
    <property type="project" value="Ensembl"/>
</dbReference>
<dbReference type="GO" id="GO:0005109">
    <property type="term" value="F:frizzled binding"/>
    <property type="evidence" value="ECO:0007669"/>
    <property type="project" value="Ensembl"/>
</dbReference>
<dbReference type="GO" id="GO:0055009">
    <property type="term" value="P:atrial cardiac muscle tissue morphogenesis"/>
    <property type="evidence" value="ECO:0007669"/>
    <property type="project" value="Ensembl"/>
</dbReference>
<dbReference type="GO" id="GO:0060070">
    <property type="term" value="P:canonical Wnt signaling pathway"/>
    <property type="evidence" value="ECO:0007669"/>
    <property type="project" value="Ensembl"/>
</dbReference>
<dbReference type="GO" id="GO:0060317">
    <property type="term" value="P:cardiac epithelial to mesenchymal transition"/>
    <property type="evidence" value="ECO:0007669"/>
    <property type="project" value="Ensembl"/>
</dbReference>
<dbReference type="GO" id="GO:0060038">
    <property type="term" value="P:cardiac muscle cell proliferation"/>
    <property type="evidence" value="ECO:0007669"/>
    <property type="project" value="Ensembl"/>
</dbReference>
<dbReference type="GO" id="GO:0045165">
    <property type="term" value="P:cell fate commitment"/>
    <property type="evidence" value="ECO:0007669"/>
    <property type="project" value="TreeGrafter"/>
</dbReference>
<dbReference type="GO" id="GO:0033278">
    <property type="term" value="P:cell proliferation in midbrain"/>
    <property type="evidence" value="ECO:0007669"/>
    <property type="project" value="Ensembl"/>
</dbReference>
<dbReference type="GO" id="GO:0007267">
    <property type="term" value="P:cell-cell signaling"/>
    <property type="evidence" value="ECO:0007669"/>
    <property type="project" value="Ensembl"/>
</dbReference>
<dbReference type="GO" id="GO:0071560">
    <property type="term" value="P:cellular response to transforming growth factor beta stimulus"/>
    <property type="evidence" value="ECO:0007669"/>
    <property type="project" value="Ensembl"/>
</dbReference>
<dbReference type="GO" id="GO:0060502">
    <property type="term" value="P:epithelial cell proliferation involved in lung morphogenesis"/>
    <property type="evidence" value="ECO:0007669"/>
    <property type="project" value="Ensembl"/>
</dbReference>
<dbReference type="GO" id="GO:0060716">
    <property type="term" value="P:labyrinthine layer blood vessel development"/>
    <property type="evidence" value="ECO:0007669"/>
    <property type="project" value="Ensembl"/>
</dbReference>
<dbReference type="GO" id="GO:0060492">
    <property type="term" value="P:lung induction"/>
    <property type="evidence" value="ECO:0007669"/>
    <property type="project" value="Ensembl"/>
</dbReference>
<dbReference type="GO" id="GO:0061180">
    <property type="term" value="P:mammary gland epithelium development"/>
    <property type="evidence" value="ECO:0007669"/>
    <property type="project" value="Ensembl"/>
</dbReference>
<dbReference type="GO" id="GO:0010463">
    <property type="term" value="P:mesenchymal cell proliferation"/>
    <property type="evidence" value="ECO:0007669"/>
    <property type="project" value="Ensembl"/>
</dbReference>
<dbReference type="GO" id="GO:1904948">
    <property type="term" value="P:midbrain dopaminergic neuron differentiation"/>
    <property type="evidence" value="ECO:0007669"/>
    <property type="project" value="Ensembl"/>
</dbReference>
<dbReference type="GO" id="GO:0060045">
    <property type="term" value="P:positive regulation of cardiac muscle cell proliferation"/>
    <property type="evidence" value="ECO:0007669"/>
    <property type="project" value="Ensembl"/>
</dbReference>
<dbReference type="GO" id="GO:0060501">
    <property type="term" value="P:positive regulation of epithelial cell proliferation involved in lung morphogenesis"/>
    <property type="evidence" value="ECO:0007669"/>
    <property type="project" value="Ensembl"/>
</dbReference>
<dbReference type="GO" id="GO:0048146">
    <property type="term" value="P:positive regulation of fibroblast proliferation"/>
    <property type="evidence" value="ECO:0007669"/>
    <property type="project" value="Ensembl"/>
</dbReference>
<dbReference type="GO" id="GO:0002053">
    <property type="term" value="P:positive regulation of mesenchymal cell proliferation"/>
    <property type="evidence" value="ECO:0007669"/>
    <property type="project" value="Ensembl"/>
</dbReference>
<dbReference type="GO" id="GO:0050769">
    <property type="term" value="P:positive regulation of neurogenesis"/>
    <property type="evidence" value="ECO:0007669"/>
    <property type="project" value="Ensembl"/>
</dbReference>
<dbReference type="GO" id="GO:0045944">
    <property type="term" value="P:positive regulation of transcription by RNA polymerase II"/>
    <property type="evidence" value="ECO:0007669"/>
    <property type="project" value="Ensembl"/>
</dbReference>
<dbReference type="CDD" id="cd19345">
    <property type="entry name" value="Wnt_Wnt2"/>
    <property type="match status" value="1"/>
</dbReference>
<dbReference type="FunFam" id="3.30.2460.20:FF:000001">
    <property type="entry name" value="Wnt homolog"/>
    <property type="match status" value="1"/>
</dbReference>
<dbReference type="Gene3D" id="3.30.2460.20">
    <property type="match status" value="1"/>
</dbReference>
<dbReference type="InterPro" id="IPR005817">
    <property type="entry name" value="Wnt"/>
</dbReference>
<dbReference type="InterPro" id="IPR009140">
    <property type="entry name" value="Wnt2"/>
</dbReference>
<dbReference type="InterPro" id="IPR043158">
    <property type="entry name" value="Wnt_C"/>
</dbReference>
<dbReference type="InterPro" id="IPR018161">
    <property type="entry name" value="Wnt_CS"/>
</dbReference>
<dbReference type="PANTHER" id="PTHR12027:SF86">
    <property type="entry name" value="PROTEIN WNT-2"/>
    <property type="match status" value="1"/>
</dbReference>
<dbReference type="PANTHER" id="PTHR12027">
    <property type="entry name" value="WNT RELATED"/>
    <property type="match status" value="1"/>
</dbReference>
<dbReference type="Pfam" id="PF00110">
    <property type="entry name" value="wnt"/>
    <property type="match status" value="1"/>
</dbReference>
<dbReference type="PRINTS" id="PR01842">
    <property type="entry name" value="WNT2PROTEIN"/>
</dbReference>
<dbReference type="PRINTS" id="PR01349">
    <property type="entry name" value="WNTPROTEIN"/>
</dbReference>
<dbReference type="SMART" id="SM00097">
    <property type="entry name" value="WNT1"/>
    <property type="match status" value="1"/>
</dbReference>
<dbReference type="PROSITE" id="PS00246">
    <property type="entry name" value="WNT1"/>
    <property type="match status" value="1"/>
</dbReference>
<comment type="function">
    <text evidence="1 2">Ligand for members of the frizzled family of seven transmembrane receptors. Functions in the canonical Wnt signaling pathway that results in activation of transcription factors of the TCF/LEF family (By similarity). Functions as a upstream regulator of FGF10 expression. Plays an important role in embryonic lung development. May contribute to embryonic brain development by regulating the proliferation of dopaminergic precursors and neurons (By similarity).</text>
</comment>
<comment type="subcellular location">
    <subcellularLocation>
        <location evidence="1">Secreted</location>
        <location evidence="1">Extracellular space</location>
        <location evidence="1">Extracellular matrix</location>
    </subcellularLocation>
    <subcellularLocation>
        <location evidence="1">Secreted</location>
    </subcellularLocation>
</comment>
<comment type="PTM">
    <text evidence="1">Palmitoleoylation is required for efficient binding to frizzled receptors. Depalmitoleoylation leads to Wnt signaling pathway inhibition.</text>
</comment>
<comment type="similarity">
    <text evidence="6">Belongs to the Wnt family.</text>
</comment>
<reference key="1">
    <citation type="submission" date="2006-09" db="EMBL/GenBank/DDBJ databases">
        <title>NISC comparative sequencing initiative.</title>
        <authorList>
            <person name="Antonellis A."/>
            <person name="Ayele K."/>
            <person name="Benjamin B."/>
            <person name="Blakesley R.W."/>
            <person name="Boakye A."/>
            <person name="Bouffard G.G."/>
            <person name="Brinkley C."/>
            <person name="Brooks S."/>
            <person name="Chu G."/>
            <person name="Coleman H."/>
            <person name="Engle J."/>
            <person name="Gestole M."/>
            <person name="Greene A."/>
            <person name="Guan X."/>
            <person name="Gupta J."/>
            <person name="Haghighi P."/>
            <person name="Han J."/>
            <person name="Hansen N."/>
            <person name="Ho S.-L."/>
            <person name="Hu P."/>
            <person name="Hunter G."/>
            <person name="Hurle B."/>
            <person name="Idol J.R."/>
            <person name="Kwong P."/>
            <person name="Laric P."/>
            <person name="Larson S."/>
            <person name="Lee-Lin S.-Q."/>
            <person name="Legaspi R."/>
            <person name="Madden M."/>
            <person name="Maduro Q.L."/>
            <person name="Maduro V.B."/>
            <person name="Margulies E.H."/>
            <person name="Masiello C."/>
            <person name="Maskeri B."/>
            <person name="McDowell J."/>
            <person name="Mojidi H.A."/>
            <person name="Mullikin J.C."/>
            <person name="Oestreicher J.S."/>
            <person name="Park M."/>
            <person name="Portnoy M.E."/>
            <person name="Prasad A."/>
            <person name="Puri O."/>
            <person name="Reddix-Dugue N."/>
            <person name="Schandler K."/>
            <person name="Schueler M.G."/>
            <person name="Sison C."/>
            <person name="Stantripop S."/>
            <person name="Stephen E."/>
            <person name="Taye A."/>
            <person name="Thomas J.W."/>
            <person name="Thomas P.J."/>
            <person name="Tsipouri V."/>
            <person name="Ung L."/>
            <person name="Vogt J.L."/>
            <person name="Wetherby K.D."/>
            <person name="Young A."/>
            <person name="Green E.D."/>
        </authorList>
    </citation>
    <scope>NUCLEOTIDE SEQUENCE [LARGE SCALE GENOMIC DNA]</scope>
</reference>
<feature type="signal peptide" evidence="5">
    <location>
        <begin position="1"/>
        <end position="25"/>
    </location>
</feature>
<feature type="chain" id="PRO_0000260346" description="Protein Wnt-2">
    <location>
        <begin position="26"/>
        <end position="360"/>
    </location>
</feature>
<feature type="lipid moiety-binding region" description="O-palmitoleoyl serine; by PORCN" evidence="4">
    <location>
        <position position="212"/>
    </location>
</feature>
<feature type="glycosylation site" description="N-linked (GlcNAc...) asparagine" evidence="5">
    <location>
        <position position="295"/>
    </location>
</feature>
<feature type="disulfide bond" evidence="3">
    <location>
        <begin position="76"/>
        <end position="87"/>
    </location>
</feature>
<feature type="disulfide bond" evidence="3">
    <location>
        <begin position="127"/>
        <end position="135"/>
    </location>
</feature>
<feature type="disulfide bond" evidence="3">
    <location>
        <begin position="137"/>
        <end position="157"/>
    </location>
</feature>
<feature type="disulfide bond" evidence="3">
    <location>
        <begin position="206"/>
        <end position="220"/>
    </location>
</feature>
<feature type="disulfide bond" evidence="3">
    <location>
        <begin position="208"/>
        <end position="215"/>
    </location>
</feature>
<feature type="disulfide bond" evidence="3">
    <location>
        <begin position="278"/>
        <end position="309"/>
    </location>
</feature>
<feature type="disulfide bond" evidence="3">
    <location>
        <begin position="294"/>
        <end position="304"/>
    </location>
</feature>
<feature type="disulfide bond" evidence="3">
    <location>
        <begin position="308"/>
        <end position="348"/>
    </location>
</feature>
<feature type="disulfide bond" evidence="3">
    <location>
        <begin position="324"/>
        <end position="339"/>
    </location>
</feature>
<feature type="disulfide bond" evidence="3">
    <location>
        <begin position="326"/>
        <end position="336"/>
    </location>
</feature>
<feature type="disulfide bond" evidence="3">
    <location>
        <begin position="331"/>
        <end position="332"/>
    </location>
</feature>